<name>I1BE_CONRA</name>
<keyword id="KW-0102">Bromination</keyword>
<keyword id="KW-0903">Direct protein sequencing</keyword>
<keyword id="KW-1015">Disulfide bond</keyword>
<keyword id="KW-0301">Gamma-carboxyglutamic acid</keyword>
<keyword id="KW-0872">Ion channel impairing toxin</keyword>
<keyword id="KW-0528">Neurotoxin</keyword>
<keyword id="KW-0964">Secreted</keyword>
<keyword id="KW-0800">Toxin</keyword>
<feature type="chain" id="PRO_0000044883" description="Conotoxin r11e">
    <location>
        <begin position="1"/>
        <end position="37"/>
    </location>
</feature>
<feature type="modified residue" description="4-carboxyglutamate" evidence="2">
    <location>
        <position position="13"/>
    </location>
</feature>
<feature type="modified residue" description="4-carboxyglutamate" evidence="2">
    <location>
        <position position="14"/>
    </location>
</feature>
<feature type="modified residue" description="6'-bromotryptophan" evidence="2">
    <location>
        <position position="34"/>
    </location>
</feature>
<feature type="disulfide bond" evidence="1">
    <location>
        <begin position="2"/>
        <end position="16"/>
    </location>
</feature>
<feature type="disulfide bond" evidence="1">
    <location>
        <begin position="9"/>
        <end position="21"/>
    </location>
</feature>
<feature type="disulfide bond" evidence="1">
    <location>
        <begin position="15"/>
        <end position="26"/>
    </location>
</feature>
<feature type="disulfide bond" evidence="1">
    <location>
        <begin position="20"/>
        <end position="33"/>
    </location>
</feature>
<evidence type="ECO:0000250" key="1">
    <source>
        <dbReference type="UniProtKB" id="Q7Z094"/>
    </source>
</evidence>
<evidence type="ECO:0000269" key="2">
    <source>
    </source>
</evidence>
<evidence type="ECO:0000305" key="3"/>
<accession>Q7M4K5</accession>
<proteinExistence type="evidence at protein level"/>
<reference key="1">
    <citation type="journal article" date="2003" name="J. Neurochem.">
        <title>Novel excitatory Conus peptides define a new conotoxin superfamily.</title>
        <authorList>
            <person name="Jimenez E.C."/>
            <person name="Shetty R.P."/>
            <person name="Lirazan M."/>
            <person name="Rivier J."/>
            <person name="Walker C."/>
            <person name="Abogadie F.C."/>
            <person name="Yoshikami D."/>
            <person name="Cruz L.J."/>
            <person name="Olivera B.M."/>
        </authorList>
    </citation>
    <scope>PROTEIN SEQUENCE</scope>
    <scope>GAMMA-CARBOXYGLUTAMATION AT GLU-13 AND GLU-14</scope>
    <scope>BROMINATION AT TRP-34</scope>
    <scope>MASS SPECTROMETRY</scope>
    <source>
        <tissue>Venom</tissue>
    </source>
</reference>
<organism>
    <name type="scientific">Conus radiatus</name>
    <name type="common">Rayed cone</name>
    <dbReference type="NCBI Taxonomy" id="61198"/>
    <lineage>
        <taxon>Eukaryota</taxon>
        <taxon>Metazoa</taxon>
        <taxon>Spiralia</taxon>
        <taxon>Lophotrochozoa</taxon>
        <taxon>Mollusca</taxon>
        <taxon>Gastropoda</taxon>
        <taxon>Caenogastropoda</taxon>
        <taxon>Neogastropoda</taxon>
        <taxon>Conoidea</taxon>
        <taxon>Conidae</taxon>
        <taxon>Conus</taxon>
        <taxon>Phasmoconus</taxon>
    </lineage>
</organism>
<sequence length="37" mass="4304">ECKTNKMSCSLHEECCRFRCCFHGKCQTSVFGCWVDP</sequence>
<comment type="function">
    <text>Causes hyperactivity, circular motion, convulsion, urination and death, when injected into 13- to 15-day-old mice. Causes gasping, backward swimming or swimming in a vertical direction and death, when intraperitoneally injected into goldfish.</text>
</comment>
<comment type="subcellular location">
    <subcellularLocation>
        <location>Secreted</location>
    </subcellularLocation>
</comment>
<comment type="tissue specificity">
    <text>Expressed by the venom duct.</text>
</comment>
<comment type="domain">
    <text>The cysteine framework is XI (C-C-CC-CC-C-C).</text>
</comment>
<comment type="mass spectrometry" mass="4463.67" method="Unknown" evidence="2"/>
<comment type="similarity">
    <text evidence="3">Belongs to the conotoxin I1 superfamily.</text>
</comment>
<dbReference type="PIR" id="A59457">
    <property type="entry name" value="A59457"/>
</dbReference>
<dbReference type="ConoServer" id="1478">
    <property type="toxin name" value="RXIE"/>
</dbReference>
<dbReference type="GO" id="GO:0005576">
    <property type="term" value="C:extracellular region"/>
    <property type="evidence" value="ECO:0007669"/>
    <property type="project" value="UniProtKB-SubCell"/>
</dbReference>
<dbReference type="GO" id="GO:0099106">
    <property type="term" value="F:ion channel regulator activity"/>
    <property type="evidence" value="ECO:0007669"/>
    <property type="project" value="UniProtKB-KW"/>
</dbReference>
<dbReference type="GO" id="GO:0090729">
    <property type="term" value="F:toxin activity"/>
    <property type="evidence" value="ECO:0007669"/>
    <property type="project" value="UniProtKB-KW"/>
</dbReference>
<dbReference type="InterPro" id="IPR013141">
    <property type="entry name" value="Conotoxin-I_CS"/>
</dbReference>
<dbReference type="InterPro" id="IPR012624">
    <property type="entry name" value="Toxin_19"/>
</dbReference>
<dbReference type="Pfam" id="PF08088">
    <property type="entry name" value="Toxin_19"/>
    <property type="match status" value="1"/>
</dbReference>
<dbReference type="PROSITE" id="PS60019">
    <property type="entry name" value="I_CONOTOXIN"/>
    <property type="match status" value="1"/>
</dbReference>
<protein>
    <recommendedName>
        <fullName>Conotoxin r11e</fullName>
    </recommendedName>
</protein>